<protein>
    <recommendedName>
        <fullName>Serine/threonine-protein kinase-transforming protein mos</fullName>
        <ecNumber>2.7.11.1</ecNumber>
    </recommendedName>
</protein>
<comment type="catalytic activity">
    <reaction>
        <text>L-seryl-[protein] + ATP = O-phospho-L-seryl-[protein] + ADP + H(+)</text>
        <dbReference type="Rhea" id="RHEA:17989"/>
        <dbReference type="Rhea" id="RHEA-COMP:9863"/>
        <dbReference type="Rhea" id="RHEA-COMP:11604"/>
        <dbReference type="ChEBI" id="CHEBI:15378"/>
        <dbReference type="ChEBI" id="CHEBI:29999"/>
        <dbReference type="ChEBI" id="CHEBI:30616"/>
        <dbReference type="ChEBI" id="CHEBI:83421"/>
        <dbReference type="ChEBI" id="CHEBI:456216"/>
        <dbReference type="EC" id="2.7.11.1"/>
    </reaction>
</comment>
<comment type="catalytic activity">
    <reaction>
        <text>L-threonyl-[protein] + ATP = O-phospho-L-threonyl-[protein] + ADP + H(+)</text>
        <dbReference type="Rhea" id="RHEA:46608"/>
        <dbReference type="Rhea" id="RHEA-COMP:11060"/>
        <dbReference type="Rhea" id="RHEA-COMP:11605"/>
        <dbReference type="ChEBI" id="CHEBI:15378"/>
        <dbReference type="ChEBI" id="CHEBI:30013"/>
        <dbReference type="ChEBI" id="CHEBI:30616"/>
        <dbReference type="ChEBI" id="CHEBI:61977"/>
        <dbReference type="ChEBI" id="CHEBI:456216"/>
        <dbReference type="EC" id="2.7.11.1"/>
    </reaction>
</comment>
<comment type="similarity">
    <text evidence="1">Belongs to the protein kinase superfamily. Ser/Thr protein kinase family.</text>
</comment>
<organism>
    <name type="scientific">Moloney murine sarcoma virus (strain m1)</name>
    <name type="common">MoMSV</name>
    <dbReference type="NCBI Taxonomy" id="11811"/>
    <lineage>
        <taxon>Viruses</taxon>
        <taxon>Riboviria</taxon>
        <taxon>Pararnavirae</taxon>
        <taxon>Artverviricota</taxon>
        <taxon>Revtraviricetes</taxon>
        <taxon>Ortervirales</taxon>
        <taxon>Retroviridae</taxon>
        <taxon>Orthoretrovirinae</taxon>
        <taxon>Gammaretrovirus</taxon>
        <taxon>Moloney murine sarcoma virus</taxon>
    </lineage>
</organism>
<sequence length="376" mass="41331">MARSTPCSQTSLAVPNHFSLVSHVTVPSEGVMPSPLSLCRCLPRELSPSVDSRSCSIPLVAPRRAGKLFLGTTPPRAPGLPRRLAWFSIDWEQVCLMHRLGSGGFGSVYKATYHGVPVAIKQVNKCTKDLRASQRSFWAELNIARLRHDNIVRVVAASTRTPEDSNSLGTIIMEFGGNVTLHQVIYGATRSPEPLSCREQLSLGKCLKYSLDVVNGLLFLHSQSILHLDLKPANILISEQDVCKISDFGCSQKLQDLRCRQASPHHIGGTYTHQAPEILKGEIATPKADIYSFGITLWQMTTREVPYSGEPQYVQYAVVAYNLRPSLAGAVFTASLTGKTLQNIIQSCWEARALQRPGAELLQRDLKALADSIEPM</sequence>
<evidence type="ECO:0000255" key="1">
    <source>
        <dbReference type="PROSITE-ProRule" id="PRU00159"/>
    </source>
</evidence>
<evidence type="ECO:0000255" key="2">
    <source>
        <dbReference type="PROSITE-ProRule" id="PRU10027"/>
    </source>
</evidence>
<dbReference type="EC" id="2.7.11.1"/>
<dbReference type="EMBL" id="K02728">
    <property type="protein sequence ID" value="AAA46497.1"/>
    <property type="molecule type" value="Genomic_DNA"/>
</dbReference>
<dbReference type="PIR" id="A00646">
    <property type="entry name" value="TVMV1M"/>
</dbReference>
<dbReference type="SMR" id="P00537"/>
<dbReference type="BRENDA" id="2.7.10.2">
    <property type="organism ID" value="3394"/>
</dbReference>
<dbReference type="GO" id="GO:0005524">
    <property type="term" value="F:ATP binding"/>
    <property type="evidence" value="ECO:0007669"/>
    <property type="project" value="UniProtKB-KW"/>
</dbReference>
<dbReference type="GO" id="GO:0106310">
    <property type="term" value="F:protein serine kinase activity"/>
    <property type="evidence" value="ECO:0007669"/>
    <property type="project" value="RHEA"/>
</dbReference>
<dbReference type="GO" id="GO:0004674">
    <property type="term" value="F:protein serine/threonine kinase activity"/>
    <property type="evidence" value="ECO:0007669"/>
    <property type="project" value="UniProtKB-KW"/>
</dbReference>
<dbReference type="CDD" id="cd13979">
    <property type="entry name" value="STKc_Mos"/>
    <property type="match status" value="1"/>
</dbReference>
<dbReference type="FunFam" id="1.10.510.10:FF:000490">
    <property type="entry name" value="Proto-oncogene serine/threonine-protein kinase mos"/>
    <property type="match status" value="1"/>
</dbReference>
<dbReference type="FunFam" id="3.30.200.20:FF:000316">
    <property type="entry name" value="Proto-oncogene serine/threonine-protein kinase mos"/>
    <property type="match status" value="1"/>
</dbReference>
<dbReference type="Gene3D" id="3.30.200.20">
    <property type="entry name" value="Phosphorylase Kinase, domain 1"/>
    <property type="match status" value="1"/>
</dbReference>
<dbReference type="Gene3D" id="1.10.510.10">
    <property type="entry name" value="Transferase(Phosphotransferase) domain 1"/>
    <property type="match status" value="1"/>
</dbReference>
<dbReference type="InterPro" id="IPR011009">
    <property type="entry name" value="Kinase-like_dom_sf"/>
</dbReference>
<dbReference type="InterPro" id="IPR000719">
    <property type="entry name" value="Prot_kinase_dom"/>
</dbReference>
<dbReference type="InterPro" id="IPR017441">
    <property type="entry name" value="Protein_kinase_ATP_BS"/>
</dbReference>
<dbReference type="InterPro" id="IPR008271">
    <property type="entry name" value="Ser/Thr_kinase_AS"/>
</dbReference>
<dbReference type="InterPro" id="IPR051681">
    <property type="entry name" value="Ser/Thr_Kinases-Pseudokinases"/>
</dbReference>
<dbReference type="PANTHER" id="PTHR44329">
    <property type="entry name" value="SERINE/THREONINE-PROTEIN KINASE TNNI3K-RELATED"/>
    <property type="match status" value="1"/>
</dbReference>
<dbReference type="PANTHER" id="PTHR44329:SF285">
    <property type="entry name" value="V-MOS MOLONEY MURINE SARCOMA VIRAL ONCO HOMOLOG"/>
    <property type="match status" value="1"/>
</dbReference>
<dbReference type="Pfam" id="PF00069">
    <property type="entry name" value="Pkinase"/>
    <property type="match status" value="1"/>
</dbReference>
<dbReference type="SMART" id="SM00220">
    <property type="entry name" value="S_TKc"/>
    <property type="match status" value="1"/>
</dbReference>
<dbReference type="SUPFAM" id="SSF56112">
    <property type="entry name" value="Protein kinase-like (PK-like)"/>
    <property type="match status" value="1"/>
</dbReference>
<dbReference type="PROSITE" id="PS00107">
    <property type="entry name" value="PROTEIN_KINASE_ATP"/>
    <property type="match status" value="1"/>
</dbReference>
<dbReference type="PROSITE" id="PS50011">
    <property type="entry name" value="PROTEIN_KINASE_DOM"/>
    <property type="match status" value="1"/>
</dbReference>
<dbReference type="PROSITE" id="PS00108">
    <property type="entry name" value="PROTEIN_KINASE_ST"/>
    <property type="match status" value="1"/>
</dbReference>
<feature type="chain" id="PRO_0000086360" description="Serine/threonine-protein kinase-transforming protein mos">
    <location>
        <begin position="1"/>
        <end position="376"/>
    </location>
</feature>
<feature type="domain" description="Protein kinase" evidence="1">
    <location>
        <begin position="94"/>
        <end position="376"/>
    </location>
</feature>
<feature type="active site" description="Proton acceptor" evidence="1 2">
    <location>
        <position position="229"/>
    </location>
</feature>
<feature type="binding site" evidence="1">
    <location>
        <begin position="100"/>
        <end position="108"/>
    </location>
    <ligand>
        <name>ATP</name>
        <dbReference type="ChEBI" id="CHEBI:30616"/>
    </ligand>
</feature>
<feature type="binding site" evidence="1">
    <location>
        <position position="121"/>
    </location>
    <ligand>
        <name>ATP</name>
        <dbReference type="ChEBI" id="CHEBI:30616"/>
    </ligand>
</feature>
<keyword id="KW-0067">ATP-binding</keyword>
<keyword id="KW-0418">Kinase</keyword>
<keyword id="KW-0547">Nucleotide-binding</keyword>
<keyword id="KW-0553">Oncogene</keyword>
<keyword id="KW-0723">Serine/threonine-protein kinase</keyword>
<keyword id="KW-0808">Transferase</keyword>
<proteinExistence type="inferred from homology"/>
<reference key="1">
    <citation type="journal article" date="1984" name="J. Virol.">
        <title>Nucleotide sequence of the transforming gene of m1 murine sarcoma virus.</title>
        <authorList>
            <person name="Brow M.A.D."/>
            <person name="Sen A."/>
            <person name="Sutcliffe J.G."/>
        </authorList>
    </citation>
    <scope>NUCLEOTIDE SEQUENCE [GENOMIC DNA]</scope>
</reference>
<name>MOS_MSVMM</name>
<accession>P00537</accession>
<gene>
    <name type="primary">V-MOS</name>
</gene>
<organismHost>
    <name type="scientific">Mus musculus</name>
    <name type="common">Mouse</name>
    <dbReference type="NCBI Taxonomy" id="10090"/>
</organismHost>